<organism>
    <name type="scientific">Kluyveromyces lactis (strain ATCC 8585 / CBS 2359 / DSM 70799 / NBRC 1267 / NRRL Y-1140 / WM37)</name>
    <name type="common">Yeast</name>
    <name type="synonym">Candida sphaerica</name>
    <dbReference type="NCBI Taxonomy" id="284590"/>
    <lineage>
        <taxon>Eukaryota</taxon>
        <taxon>Fungi</taxon>
        <taxon>Dikarya</taxon>
        <taxon>Ascomycota</taxon>
        <taxon>Saccharomycotina</taxon>
        <taxon>Saccharomycetes</taxon>
        <taxon>Saccharomycetales</taxon>
        <taxon>Saccharomycetaceae</taxon>
        <taxon>Kluyveromyces</taxon>
    </lineage>
</organism>
<sequence length="434" mass="48789">MEMSELLASEVVSSGPDYAKKSVDGLNMTAANGTNDTLMTLDEYLNKSLPLHLEQLILDANQKELFDSAAKSLLSSTLLAKQQQSLQIAPIQPQSSFSSQSFAEGLIVGQLSVIVALIFVIKFFVFSEGGTKTATAKSVGSASSFMDSTKNSILSTIIKRGGKDGLEVDDKDNEKSRQINSILEKTYYNVETHSPESLDWFNVLIAQTIHQFREEALQKNNILNSLNDFIERRSNELPQYLDQIKITEVDIGDDFPIFSNCIIQYSPNSNKKRLEAKIDIDLSDRLALGIETKLLLNYPKPFSAALPIKLTVSIVRFQACLTVSLTTDEQFVPTSEETNDDEMGNDKGYYLMFSFNPEYRMELEVKSLIGARSKLENIPKIASLIEYQISKWFVERCVEPRFQFVKLPSMWPRSKNTRKEKTDTDDSVSVKSND</sequence>
<proteinExistence type="inferred from homology"/>
<evidence type="ECO:0000255" key="1">
    <source>
        <dbReference type="HAMAP-Rule" id="MF_03103"/>
    </source>
</evidence>
<evidence type="ECO:0000256" key="2">
    <source>
        <dbReference type="SAM" id="MobiDB-lite"/>
    </source>
</evidence>
<gene>
    <name evidence="1" type="primary">MMM1</name>
    <name type="ordered locus">KLLA0F15796g</name>
</gene>
<protein>
    <recommendedName>
        <fullName evidence="1">Maintenance of mitochondrial morphology protein 1</fullName>
    </recommendedName>
</protein>
<feature type="chain" id="PRO_0000384231" description="Maintenance of mitochondrial morphology protein 1">
    <location>
        <begin position="1"/>
        <end position="434"/>
    </location>
</feature>
<feature type="topological domain" description="Lumenal" evidence="1">
    <location>
        <begin position="1"/>
        <end position="105"/>
    </location>
</feature>
<feature type="transmembrane region" description="Helical" evidence="1">
    <location>
        <begin position="106"/>
        <end position="126"/>
    </location>
</feature>
<feature type="topological domain" description="Cytoplasmic" evidence="1">
    <location>
        <begin position="127"/>
        <end position="434"/>
    </location>
</feature>
<feature type="domain" description="SMP-LTD" evidence="1">
    <location>
        <begin position="194"/>
        <end position="408"/>
    </location>
</feature>
<feature type="region of interest" description="Disordered" evidence="2">
    <location>
        <begin position="415"/>
        <end position="434"/>
    </location>
</feature>
<accession>Q6CJU9</accession>
<dbReference type="EMBL" id="CR382126">
    <property type="protein sequence ID" value="CAG98498.1"/>
    <property type="molecule type" value="Genomic_DNA"/>
</dbReference>
<dbReference type="RefSeq" id="XP_455790.1">
    <property type="nucleotide sequence ID" value="XM_455790.1"/>
</dbReference>
<dbReference type="SMR" id="Q6CJU9"/>
<dbReference type="FunCoup" id="Q6CJU9">
    <property type="interactions" value="95"/>
</dbReference>
<dbReference type="STRING" id="284590.Q6CJU9"/>
<dbReference type="PaxDb" id="284590-Q6CJU9"/>
<dbReference type="KEGG" id="kla:KLLA0_F15796g"/>
<dbReference type="eggNOG" id="ENOG502QUUW">
    <property type="taxonomic scope" value="Eukaryota"/>
</dbReference>
<dbReference type="HOGENOM" id="CLU_032730_2_0_1"/>
<dbReference type="InParanoid" id="Q6CJU9"/>
<dbReference type="OMA" id="WSFTQGL"/>
<dbReference type="Proteomes" id="UP000000598">
    <property type="component" value="Chromosome F"/>
</dbReference>
<dbReference type="GO" id="GO:0005789">
    <property type="term" value="C:endoplasmic reticulum membrane"/>
    <property type="evidence" value="ECO:0007669"/>
    <property type="project" value="UniProtKB-SubCell"/>
</dbReference>
<dbReference type="GO" id="GO:0032865">
    <property type="term" value="C:ERMES complex"/>
    <property type="evidence" value="ECO:0007669"/>
    <property type="project" value="UniProtKB-UniRule"/>
</dbReference>
<dbReference type="GO" id="GO:0008289">
    <property type="term" value="F:lipid binding"/>
    <property type="evidence" value="ECO:0007669"/>
    <property type="project" value="UniProtKB-KW"/>
</dbReference>
<dbReference type="GO" id="GO:0000002">
    <property type="term" value="P:mitochondrial genome maintenance"/>
    <property type="evidence" value="ECO:0007669"/>
    <property type="project" value="UniProtKB-UniRule"/>
</dbReference>
<dbReference type="GO" id="GO:1990456">
    <property type="term" value="P:mitochondrion-endoplasmic reticulum membrane tethering"/>
    <property type="evidence" value="ECO:0007669"/>
    <property type="project" value="TreeGrafter"/>
</dbReference>
<dbReference type="GO" id="GO:0015914">
    <property type="term" value="P:phospholipid transport"/>
    <property type="evidence" value="ECO:0007669"/>
    <property type="project" value="TreeGrafter"/>
</dbReference>
<dbReference type="GO" id="GO:0045040">
    <property type="term" value="P:protein insertion into mitochondrial outer membrane"/>
    <property type="evidence" value="ECO:0007669"/>
    <property type="project" value="UniProtKB-UniRule"/>
</dbReference>
<dbReference type="CDD" id="cd21671">
    <property type="entry name" value="SMP_Mmm1"/>
    <property type="match status" value="1"/>
</dbReference>
<dbReference type="HAMAP" id="MF_03103">
    <property type="entry name" value="Mmm1"/>
    <property type="match status" value="1"/>
</dbReference>
<dbReference type="InterPro" id="IPR027537">
    <property type="entry name" value="Mmm1"/>
</dbReference>
<dbReference type="InterPro" id="IPR019411">
    <property type="entry name" value="MMM1_dom"/>
</dbReference>
<dbReference type="InterPro" id="IPR031468">
    <property type="entry name" value="SMP_LBD"/>
</dbReference>
<dbReference type="PANTHER" id="PTHR13466:SF0">
    <property type="entry name" value="SMP-LTD DOMAIN-CONTAINING PROTEIN"/>
    <property type="match status" value="1"/>
</dbReference>
<dbReference type="PANTHER" id="PTHR13466">
    <property type="entry name" value="TEX2 PROTEIN-RELATED"/>
    <property type="match status" value="1"/>
</dbReference>
<dbReference type="Pfam" id="PF10296">
    <property type="entry name" value="MMM1"/>
    <property type="match status" value="1"/>
</dbReference>
<dbReference type="PROSITE" id="PS51847">
    <property type="entry name" value="SMP"/>
    <property type="match status" value="1"/>
</dbReference>
<reference key="1">
    <citation type="journal article" date="2004" name="Nature">
        <title>Genome evolution in yeasts.</title>
        <authorList>
            <person name="Dujon B."/>
            <person name="Sherman D."/>
            <person name="Fischer G."/>
            <person name="Durrens P."/>
            <person name="Casaregola S."/>
            <person name="Lafontaine I."/>
            <person name="de Montigny J."/>
            <person name="Marck C."/>
            <person name="Neuveglise C."/>
            <person name="Talla E."/>
            <person name="Goffard N."/>
            <person name="Frangeul L."/>
            <person name="Aigle M."/>
            <person name="Anthouard V."/>
            <person name="Babour A."/>
            <person name="Barbe V."/>
            <person name="Barnay S."/>
            <person name="Blanchin S."/>
            <person name="Beckerich J.-M."/>
            <person name="Beyne E."/>
            <person name="Bleykasten C."/>
            <person name="Boisrame A."/>
            <person name="Boyer J."/>
            <person name="Cattolico L."/>
            <person name="Confanioleri F."/>
            <person name="de Daruvar A."/>
            <person name="Despons L."/>
            <person name="Fabre E."/>
            <person name="Fairhead C."/>
            <person name="Ferry-Dumazet H."/>
            <person name="Groppi A."/>
            <person name="Hantraye F."/>
            <person name="Hennequin C."/>
            <person name="Jauniaux N."/>
            <person name="Joyet P."/>
            <person name="Kachouri R."/>
            <person name="Kerrest A."/>
            <person name="Koszul R."/>
            <person name="Lemaire M."/>
            <person name="Lesur I."/>
            <person name="Ma L."/>
            <person name="Muller H."/>
            <person name="Nicaud J.-M."/>
            <person name="Nikolski M."/>
            <person name="Oztas S."/>
            <person name="Ozier-Kalogeropoulos O."/>
            <person name="Pellenz S."/>
            <person name="Potier S."/>
            <person name="Richard G.-F."/>
            <person name="Straub M.-L."/>
            <person name="Suleau A."/>
            <person name="Swennen D."/>
            <person name="Tekaia F."/>
            <person name="Wesolowski-Louvel M."/>
            <person name="Westhof E."/>
            <person name="Wirth B."/>
            <person name="Zeniou-Meyer M."/>
            <person name="Zivanovic Y."/>
            <person name="Bolotin-Fukuhara M."/>
            <person name="Thierry A."/>
            <person name="Bouchier C."/>
            <person name="Caudron B."/>
            <person name="Scarpelli C."/>
            <person name="Gaillardin C."/>
            <person name="Weissenbach J."/>
            <person name="Wincker P."/>
            <person name="Souciet J.-L."/>
        </authorList>
    </citation>
    <scope>NUCLEOTIDE SEQUENCE [LARGE SCALE GENOMIC DNA]</scope>
    <source>
        <strain>ATCC 8585 / CBS 2359 / DSM 70799 / NBRC 1267 / NRRL Y-1140 / WM37</strain>
    </source>
</reference>
<comment type="function">
    <text evidence="1">Component of the ERMES/MDM complex, which serves as a molecular tether to connect the endoplasmic reticulum (ER) and mitochondria. Components of this complex are involved in the control of mitochondrial shape and protein biogenesis, and function in nonvesicular lipid trafficking between the ER and mitochondria. The MDM12-MMM1 subcomplex functions in the major beta-barrel assembly pathway that is responsible for biogenesis of all outer membrane beta-barrel proteins, and acts in a late step after the SAM complex. The MDM10-MDM12-MMM1 subcomplex further acts in the TOM40-specific pathway after the action of the MDM12-MMM1 complex. Essential for establishing and maintaining the structure of mitochondria and maintenance of mtDNA nucleoids.</text>
</comment>
<comment type="subunit">
    <text evidence="1">Homodimer. Component of the ER-mitochondria encounter structure (ERMES) or MDM complex, composed of MMM1, MDM10, MDM12 and MDM34. A MMM1 homodimer associates with one molecule of MDM12 on each side in a pairwise head-to-tail manner, and the SMP-LTD domains of MMM1 and MDM12 generate a continuous hydrophobic tunnel for phospholipid trafficking.</text>
</comment>
<comment type="subcellular location">
    <subcellularLocation>
        <location evidence="1">Endoplasmic reticulum membrane</location>
        <topology evidence="1">Single-pass type I membrane protein</topology>
    </subcellularLocation>
    <text evidence="1">The ERMES/MDM complex localizes to a few discrete foci (around 10 per single cell), that represent mitochondria-endoplasmic reticulum junctions. These foci are often found next to mtDNA nucleoids.</text>
</comment>
<comment type="domain">
    <text evidence="1">The SMP-LTD domain is a barrel-like domain that can bind various types of glycerophospholipids in its interior and mediate their transfer between two adjacent bilayers.</text>
</comment>
<comment type="similarity">
    <text evidence="1">Belongs to the MMM1 family.</text>
</comment>
<keyword id="KW-0256">Endoplasmic reticulum</keyword>
<keyword id="KW-0445">Lipid transport</keyword>
<keyword id="KW-0446">Lipid-binding</keyword>
<keyword id="KW-0472">Membrane</keyword>
<keyword id="KW-1185">Reference proteome</keyword>
<keyword id="KW-0812">Transmembrane</keyword>
<keyword id="KW-1133">Transmembrane helix</keyword>
<keyword id="KW-0813">Transport</keyword>
<name>MMM1_KLULA</name>